<proteinExistence type="inferred from homology"/>
<comment type="function">
    <text evidence="1">Methyltransferase required for the conversion of demethylmenaquinol (DMKH2) to menaquinol (MKH2) and the conversion of 2-polyprenyl-6-methoxy-1,4-benzoquinol (DDMQH2) to 2-polyprenyl-3-methyl-6-methoxy-1,4-benzoquinol (DMQH2).</text>
</comment>
<comment type="catalytic activity">
    <reaction evidence="1">
        <text>a 2-demethylmenaquinol + S-adenosyl-L-methionine = a menaquinol + S-adenosyl-L-homocysteine + H(+)</text>
        <dbReference type="Rhea" id="RHEA:42640"/>
        <dbReference type="Rhea" id="RHEA-COMP:9539"/>
        <dbReference type="Rhea" id="RHEA-COMP:9563"/>
        <dbReference type="ChEBI" id="CHEBI:15378"/>
        <dbReference type="ChEBI" id="CHEBI:18151"/>
        <dbReference type="ChEBI" id="CHEBI:55437"/>
        <dbReference type="ChEBI" id="CHEBI:57856"/>
        <dbReference type="ChEBI" id="CHEBI:59789"/>
        <dbReference type="EC" id="2.1.1.163"/>
    </reaction>
</comment>
<comment type="catalytic activity">
    <reaction evidence="1">
        <text>a 2-methoxy-6-(all-trans-polyprenyl)benzene-1,4-diol + S-adenosyl-L-methionine = a 5-methoxy-2-methyl-3-(all-trans-polyprenyl)benzene-1,4-diol + S-adenosyl-L-homocysteine + H(+)</text>
        <dbReference type="Rhea" id="RHEA:28286"/>
        <dbReference type="Rhea" id="RHEA-COMP:10858"/>
        <dbReference type="Rhea" id="RHEA-COMP:10859"/>
        <dbReference type="ChEBI" id="CHEBI:15378"/>
        <dbReference type="ChEBI" id="CHEBI:57856"/>
        <dbReference type="ChEBI" id="CHEBI:59789"/>
        <dbReference type="ChEBI" id="CHEBI:84166"/>
        <dbReference type="ChEBI" id="CHEBI:84167"/>
        <dbReference type="EC" id="2.1.1.201"/>
    </reaction>
</comment>
<comment type="pathway">
    <text evidence="1">Quinol/quinone metabolism; menaquinone biosynthesis; menaquinol from 1,4-dihydroxy-2-naphthoate: step 2/2.</text>
</comment>
<comment type="pathway">
    <text evidence="1">Cofactor biosynthesis; ubiquinone biosynthesis.</text>
</comment>
<comment type="similarity">
    <text evidence="1">Belongs to the class I-like SAM-binding methyltransferase superfamily. MenG/UbiE family.</text>
</comment>
<sequence length="251" mass="28106">MSEGEPKNTHFGYKTVEADKKADLVADVFHSVAAKYDIMNDVMSFGVHRFWKRHTIEVAAARPGMKVLDLAGGTGDLTAKFSHLVGDRGQVVLADINDSMLKVGRTKLRDKGIVNNVSYVQANAEALPFPDNHFDIITIAFGLRNVTDKDAALRSMQRVLKPGGKLLVLEFSTPKHELMRKVYDMYSFKVLPKMGALITKDADSYEYLAESIRMHPDQETLKQMMVDAGFEQVDYTNMTDGVVALHRGYKF</sequence>
<feature type="chain" id="PRO_1000056296" description="Ubiquinone/menaquinone biosynthesis C-methyltransferase UbiE">
    <location>
        <begin position="1"/>
        <end position="251"/>
    </location>
</feature>
<feature type="binding site" evidence="1">
    <location>
        <position position="74"/>
    </location>
    <ligand>
        <name>S-adenosyl-L-methionine</name>
        <dbReference type="ChEBI" id="CHEBI:59789"/>
    </ligand>
</feature>
<feature type="binding site" evidence="1">
    <location>
        <position position="95"/>
    </location>
    <ligand>
        <name>S-adenosyl-L-methionine</name>
        <dbReference type="ChEBI" id="CHEBI:59789"/>
    </ligand>
</feature>
<feature type="binding site" evidence="1">
    <location>
        <begin position="123"/>
        <end position="124"/>
    </location>
    <ligand>
        <name>S-adenosyl-L-methionine</name>
        <dbReference type="ChEBI" id="CHEBI:59789"/>
    </ligand>
</feature>
<accession>Q088H8</accession>
<dbReference type="EC" id="2.1.1.163" evidence="1"/>
<dbReference type="EC" id="2.1.1.201" evidence="1"/>
<dbReference type="EMBL" id="CP000447">
    <property type="protein sequence ID" value="ABI70337.1"/>
    <property type="molecule type" value="Genomic_DNA"/>
</dbReference>
<dbReference type="RefSeq" id="WP_011635964.1">
    <property type="nucleotide sequence ID" value="NC_008345.1"/>
</dbReference>
<dbReference type="SMR" id="Q088H8"/>
<dbReference type="STRING" id="318167.Sfri_0475"/>
<dbReference type="KEGG" id="sfr:Sfri_0475"/>
<dbReference type="eggNOG" id="COG2226">
    <property type="taxonomic scope" value="Bacteria"/>
</dbReference>
<dbReference type="HOGENOM" id="CLU_037990_0_0_6"/>
<dbReference type="OrthoDB" id="9808140at2"/>
<dbReference type="UniPathway" id="UPA00079">
    <property type="reaction ID" value="UER00169"/>
</dbReference>
<dbReference type="UniPathway" id="UPA00232"/>
<dbReference type="Proteomes" id="UP000000684">
    <property type="component" value="Chromosome"/>
</dbReference>
<dbReference type="GO" id="GO:0008425">
    <property type="term" value="F:2-methoxy-6-polyprenyl-1,4-benzoquinol methyltransferase activity"/>
    <property type="evidence" value="ECO:0007669"/>
    <property type="project" value="UniProtKB-UniRule"/>
</dbReference>
<dbReference type="GO" id="GO:0043770">
    <property type="term" value="F:demethylmenaquinone methyltransferase activity"/>
    <property type="evidence" value="ECO:0007669"/>
    <property type="project" value="UniProtKB-UniRule"/>
</dbReference>
<dbReference type="GO" id="GO:0009060">
    <property type="term" value="P:aerobic respiration"/>
    <property type="evidence" value="ECO:0007669"/>
    <property type="project" value="UniProtKB-UniRule"/>
</dbReference>
<dbReference type="GO" id="GO:0009234">
    <property type="term" value="P:menaquinone biosynthetic process"/>
    <property type="evidence" value="ECO:0007669"/>
    <property type="project" value="UniProtKB-UniRule"/>
</dbReference>
<dbReference type="GO" id="GO:0032259">
    <property type="term" value="P:methylation"/>
    <property type="evidence" value="ECO:0007669"/>
    <property type="project" value="UniProtKB-KW"/>
</dbReference>
<dbReference type="CDD" id="cd02440">
    <property type="entry name" value="AdoMet_MTases"/>
    <property type="match status" value="1"/>
</dbReference>
<dbReference type="FunFam" id="3.40.50.150:FF:000014">
    <property type="entry name" value="Ubiquinone/menaquinone biosynthesis C-methyltransferase UbiE"/>
    <property type="match status" value="1"/>
</dbReference>
<dbReference type="Gene3D" id="3.40.50.150">
    <property type="entry name" value="Vaccinia Virus protein VP39"/>
    <property type="match status" value="1"/>
</dbReference>
<dbReference type="HAMAP" id="MF_01813">
    <property type="entry name" value="MenG_UbiE_methyltr"/>
    <property type="match status" value="1"/>
</dbReference>
<dbReference type="InterPro" id="IPR029063">
    <property type="entry name" value="SAM-dependent_MTases_sf"/>
</dbReference>
<dbReference type="InterPro" id="IPR004033">
    <property type="entry name" value="UbiE/COQ5_MeTrFase"/>
</dbReference>
<dbReference type="InterPro" id="IPR023576">
    <property type="entry name" value="UbiE/COQ5_MeTrFase_CS"/>
</dbReference>
<dbReference type="NCBIfam" id="TIGR01934">
    <property type="entry name" value="MenG_MenH_UbiE"/>
    <property type="match status" value="1"/>
</dbReference>
<dbReference type="NCBIfam" id="NF001240">
    <property type="entry name" value="PRK00216.1-1"/>
    <property type="match status" value="1"/>
</dbReference>
<dbReference type="NCBIfam" id="NF001242">
    <property type="entry name" value="PRK00216.1-3"/>
    <property type="match status" value="1"/>
</dbReference>
<dbReference type="NCBIfam" id="NF001244">
    <property type="entry name" value="PRK00216.1-5"/>
    <property type="match status" value="1"/>
</dbReference>
<dbReference type="PANTHER" id="PTHR43591:SF24">
    <property type="entry name" value="2-METHOXY-6-POLYPRENYL-1,4-BENZOQUINOL METHYLASE, MITOCHONDRIAL"/>
    <property type="match status" value="1"/>
</dbReference>
<dbReference type="PANTHER" id="PTHR43591">
    <property type="entry name" value="METHYLTRANSFERASE"/>
    <property type="match status" value="1"/>
</dbReference>
<dbReference type="Pfam" id="PF01209">
    <property type="entry name" value="Ubie_methyltran"/>
    <property type="match status" value="1"/>
</dbReference>
<dbReference type="SUPFAM" id="SSF53335">
    <property type="entry name" value="S-adenosyl-L-methionine-dependent methyltransferases"/>
    <property type="match status" value="1"/>
</dbReference>
<dbReference type="PROSITE" id="PS51608">
    <property type="entry name" value="SAM_MT_UBIE"/>
    <property type="match status" value="1"/>
</dbReference>
<dbReference type="PROSITE" id="PS01183">
    <property type="entry name" value="UBIE_1"/>
    <property type="match status" value="1"/>
</dbReference>
<dbReference type="PROSITE" id="PS01184">
    <property type="entry name" value="UBIE_2"/>
    <property type="match status" value="1"/>
</dbReference>
<name>UBIE_SHEFN</name>
<keyword id="KW-0474">Menaquinone biosynthesis</keyword>
<keyword id="KW-0489">Methyltransferase</keyword>
<keyword id="KW-1185">Reference proteome</keyword>
<keyword id="KW-0949">S-adenosyl-L-methionine</keyword>
<keyword id="KW-0808">Transferase</keyword>
<keyword id="KW-0831">Ubiquinone biosynthesis</keyword>
<gene>
    <name evidence="1" type="primary">ubiE</name>
    <name type="ordered locus">Sfri_0475</name>
</gene>
<reference key="1">
    <citation type="submission" date="2006-08" db="EMBL/GenBank/DDBJ databases">
        <title>Complete sequence of Shewanella frigidimarina NCIMB 400.</title>
        <authorList>
            <consortium name="US DOE Joint Genome Institute"/>
            <person name="Copeland A."/>
            <person name="Lucas S."/>
            <person name="Lapidus A."/>
            <person name="Barry K."/>
            <person name="Detter J.C."/>
            <person name="Glavina del Rio T."/>
            <person name="Hammon N."/>
            <person name="Israni S."/>
            <person name="Dalin E."/>
            <person name="Tice H."/>
            <person name="Pitluck S."/>
            <person name="Fredrickson J.K."/>
            <person name="Kolker E."/>
            <person name="McCuel L.A."/>
            <person name="DiChristina T."/>
            <person name="Nealson K.H."/>
            <person name="Newman D."/>
            <person name="Tiedje J.M."/>
            <person name="Zhou J."/>
            <person name="Romine M.F."/>
            <person name="Culley D.E."/>
            <person name="Serres M."/>
            <person name="Chertkov O."/>
            <person name="Brettin T."/>
            <person name="Bruce D."/>
            <person name="Han C."/>
            <person name="Tapia R."/>
            <person name="Gilna P."/>
            <person name="Schmutz J."/>
            <person name="Larimer F."/>
            <person name="Land M."/>
            <person name="Hauser L."/>
            <person name="Kyrpides N."/>
            <person name="Mikhailova N."/>
            <person name="Richardson P."/>
        </authorList>
    </citation>
    <scope>NUCLEOTIDE SEQUENCE [LARGE SCALE GENOMIC DNA]</scope>
    <source>
        <strain>NCIMB 400</strain>
    </source>
</reference>
<organism>
    <name type="scientific">Shewanella frigidimarina (strain NCIMB 400)</name>
    <dbReference type="NCBI Taxonomy" id="318167"/>
    <lineage>
        <taxon>Bacteria</taxon>
        <taxon>Pseudomonadati</taxon>
        <taxon>Pseudomonadota</taxon>
        <taxon>Gammaproteobacteria</taxon>
        <taxon>Alteromonadales</taxon>
        <taxon>Shewanellaceae</taxon>
        <taxon>Shewanella</taxon>
    </lineage>
</organism>
<protein>
    <recommendedName>
        <fullName evidence="1">Ubiquinone/menaquinone biosynthesis C-methyltransferase UbiE</fullName>
        <ecNumber evidence="1">2.1.1.163</ecNumber>
        <ecNumber evidence="1">2.1.1.201</ecNumber>
    </recommendedName>
    <alternativeName>
        <fullName evidence="1">2-methoxy-6-polyprenyl-1,4-benzoquinol methylase</fullName>
    </alternativeName>
    <alternativeName>
        <fullName evidence="1">Demethylmenaquinone methyltransferase</fullName>
    </alternativeName>
</protein>
<evidence type="ECO:0000255" key="1">
    <source>
        <dbReference type="HAMAP-Rule" id="MF_01813"/>
    </source>
</evidence>